<reference key="1">
    <citation type="journal article" date="1986" name="J. Mol. Biol.">
        <title>Sequence of the short unique region, short repeats, and part of the long repeats of human cytomegalovirus.</title>
        <authorList>
            <person name="Weston K.M."/>
            <person name="Barrell B.G."/>
        </authorList>
    </citation>
    <scope>NUCLEOTIDE SEQUENCE [GENOMIC DNA]</scope>
</reference>
<reference key="2">
    <citation type="journal article" date="1990" name="Curr. Top. Microbiol. Immunol.">
        <title>Analysis of the protein-coding content of the sequence of human cytomegalovirus strain AD169.</title>
        <authorList>
            <person name="Chee M.S."/>
            <person name="Bankier A.T."/>
            <person name="Beck S."/>
            <person name="Bohni R."/>
            <person name="Brown C.M."/>
            <person name="Cerny R."/>
            <person name="Horsnell T."/>
            <person name="Hutchison C.A. III"/>
            <person name="Kouzarides T."/>
            <person name="Martignetti J.A."/>
            <person name="Preddie E."/>
            <person name="Satchwell S.C."/>
            <person name="Tomlinson P."/>
            <person name="Weston K.M."/>
            <person name="Barrell B.G."/>
        </authorList>
    </citation>
    <scope>NUCLEOTIDE SEQUENCE [LARGE SCALE GENOMIC DNA]</scope>
</reference>
<reference key="3">
    <citation type="journal article" date="2003" name="J. Gen. Virol.">
        <title>The human cytomegalovirus genome revisited: comparison with the chimpanzee cytomegalovirus genome.</title>
        <authorList>
            <person name="Davison A.J."/>
            <person name="Dolan A."/>
            <person name="Akter P."/>
            <person name="Addison C."/>
            <person name="Dargan D.J."/>
            <person name="Alcendor D.J."/>
            <person name="McGeoch D.J."/>
            <person name="Hayward G.S."/>
        </authorList>
    </citation>
    <scope>GENOME REANNOTATION</scope>
</reference>
<reference key="4">
    <citation type="journal article" date="2003" name="J. Gen. Virol.">
        <authorList>
            <person name="Davison A.J."/>
            <person name="Dolan A."/>
            <person name="Akter P."/>
            <person name="Addison C."/>
            <person name="Dargan D.J."/>
            <person name="Alcendor D.J."/>
            <person name="McGeoch D.J."/>
            <person name="Hayward G.S."/>
        </authorList>
    </citation>
    <scope>ERRATUM OF PUBMED:12533697</scope>
</reference>
<gene>
    <name type="primary">US21</name>
</gene>
<accession>P09723</accession>
<accession>Q7M6H8</accession>
<dbReference type="EMBL" id="X17403">
    <property type="protein sequence ID" value="CAA35288.1"/>
    <property type="molecule type" value="Genomic_DNA"/>
</dbReference>
<dbReference type="EMBL" id="X04650">
    <property type="protein sequence ID" value="CAB37113.1"/>
    <property type="molecule type" value="Genomic_DNA"/>
</dbReference>
<dbReference type="EMBL" id="BK000394">
    <property type="protein sequence ID" value="DAA00210.1"/>
    <property type="molecule type" value="Genomic_DNA"/>
</dbReference>
<dbReference type="PIR" id="E27231">
    <property type="entry name" value="QQBEG5"/>
</dbReference>
<dbReference type="Proteomes" id="UP000008991">
    <property type="component" value="Segment"/>
</dbReference>
<dbReference type="Proteomes" id="UP000008992">
    <property type="component" value="Segment"/>
</dbReference>
<dbReference type="GO" id="GO:0016020">
    <property type="term" value="C:membrane"/>
    <property type="evidence" value="ECO:0007669"/>
    <property type="project" value="UniProtKB-SubCell"/>
</dbReference>
<dbReference type="InterPro" id="IPR006214">
    <property type="entry name" value="Bax_inhibitor_1-related"/>
</dbReference>
<dbReference type="PANTHER" id="PTHR23291">
    <property type="entry name" value="BAX INHIBITOR-RELATED"/>
    <property type="match status" value="1"/>
</dbReference>
<dbReference type="PANTHER" id="PTHR23291:SF50">
    <property type="entry name" value="PROTEIN LIFEGUARD 4"/>
    <property type="match status" value="1"/>
</dbReference>
<dbReference type="Pfam" id="PF01027">
    <property type="entry name" value="Bax1-I"/>
    <property type="match status" value="1"/>
</dbReference>
<organismHost>
    <name type="scientific">Homo sapiens</name>
    <name type="common">Human</name>
    <dbReference type="NCBI Taxonomy" id="9606"/>
</organismHost>
<protein>
    <recommendedName>
        <fullName>Uncharacterized protein HWLF2</fullName>
    </recommendedName>
</protein>
<sequence length="239" mass="26585">MSLRGQVQIARSVFLLRIYILIWVQCLILMSVCAFCWLVLPHRLEQLFSSVRLTLSCLMISIVCLGLLRWAEPNFPKNVWILLTYTLLTSVAVTASGFHFSHRSVIYAMVATVTLFCFLTLATYLFARDVELQRSLLTGASTLILLLFAVFSLFPEAVSEILVMIAGLAVIVTSVVCDTQDILHDIEYESYIPGALCLYMDLMYLFVSVLYFMPSEPGSAHTAQTTVAATAAASPQFVS</sequence>
<evidence type="ECO:0000255" key="1"/>
<evidence type="ECO:0000305" key="2"/>
<feature type="chain" id="PRO_0000115283" description="Uncharacterized protein HWLF2">
    <location>
        <begin position="1"/>
        <end position="239"/>
    </location>
</feature>
<feature type="transmembrane region" description="Helical" evidence="1">
    <location>
        <begin position="20"/>
        <end position="40"/>
    </location>
</feature>
<feature type="transmembrane region" description="Helical" evidence="1">
    <location>
        <begin position="48"/>
        <end position="68"/>
    </location>
</feature>
<feature type="transmembrane region" description="Helical" evidence="1">
    <location>
        <begin position="80"/>
        <end position="100"/>
    </location>
</feature>
<feature type="transmembrane region" description="Helical" evidence="1">
    <location>
        <begin position="106"/>
        <end position="126"/>
    </location>
</feature>
<feature type="transmembrane region" description="Helical" evidence="1">
    <location>
        <begin position="143"/>
        <end position="163"/>
    </location>
</feature>
<feature type="transmembrane region" description="Helical" evidence="1">
    <location>
        <begin position="164"/>
        <end position="184"/>
    </location>
</feature>
<feature type="transmembrane region" description="Helical" evidence="1">
    <location>
        <begin position="192"/>
        <end position="212"/>
    </location>
</feature>
<organism>
    <name type="scientific">Human cytomegalovirus (strain AD169)</name>
    <name type="common">HHV-5</name>
    <name type="synonym">Human herpesvirus 5</name>
    <dbReference type="NCBI Taxonomy" id="10360"/>
    <lineage>
        <taxon>Viruses</taxon>
        <taxon>Duplodnaviria</taxon>
        <taxon>Heunggongvirae</taxon>
        <taxon>Peploviricota</taxon>
        <taxon>Herviviricetes</taxon>
        <taxon>Herpesvirales</taxon>
        <taxon>Orthoherpesviridae</taxon>
        <taxon>Betaherpesvirinae</taxon>
        <taxon>Cytomegalovirus</taxon>
        <taxon>Cytomegalovirus humanbeta5</taxon>
        <taxon>Human cytomegalovirus</taxon>
    </lineage>
</organism>
<keyword id="KW-0472">Membrane</keyword>
<keyword id="KW-1185">Reference proteome</keyword>
<keyword id="KW-0812">Transmembrane</keyword>
<keyword id="KW-1133">Transmembrane helix</keyword>
<name>US21_HCMVA</name>
<proteinExistence type="inferred from homology"/>
<comment type="subcellular location">
    <subcellularLocation>
        <location evidence="2">Membrane</location>
        <topology evidence="2">Multi-pass membrane protein</topology>
    </subcellularLocation>
</comment>
<comment type="similarity">
    <text evidence="2">Belongs to the cytomegalovirus US12 family.</text>
</comment>